<proteinExistence type="inferred from homology"/>
<name>NQRE_CHLPN</name>
<evidence type="ECO:0000255" key="1">
    <source>
        <dbReference type="HAMAP-Rule" id="MF_00429"/>
    </source>
</evidence>
<evidence type="ECO:0000256" key="2">
    <source>
        <dbReference type="SAM" id="MobiDB-lite"/>
    </source>
</evidence>
<dbReference type="EC" id="7.2.1.1" evidence="1"/>
<dbReference type="EMBL" id="AE001363">
    <property type="protein sequence ID" value="AAD18574.1"/>
    <property type="molecule type" value="Genomic_DNA"/>
</dbReference>
<dbReference type="EMBL" id="AE002161">
    <property type="protein sequence ID" value="AAF38178.1"/>
    <property type="molecule type" value="Genomic_DNA"/>
</dbReference>
<dbReference type="EMBL" id="BA000008">
    <property type="protein sequence ID" value="BAA98638.1"/>
    <property type="molecule type" value="Genomic_DNA"/>
</dbReference>
<dbReference type="EMBL" id="AE009440">
    <property type="protein sequence ID" value="AAP98377.1"/>
    <property type="molecule type" value="Genomic_DNA"/>
</dbReference>
<dbReference type="PIR" id="D86544">
    <property type="entry name" value="D86544"/>
</dbReference>
<dbReference type="PIR" id="H72078">
    <property type="entry name" value="H72078"/>
</dbReference>
<dbReference type="RefSeq" id="NP_224630.1">
    <property type="nucleotide sequence ID" value="NC_000922.1"/>
</dbReference>
<dbReference type="RefSeq" id="WP_010883073.1">
    <property type="nucleotide sequence ID" value="NZ_LN847257.1"/>
</dbReference>
<dbReference type="SMR" id="Q9Z8B3"/>
<dbReference type="STRING" id="406984.CPK_ORF00942"/>
<dbReference type="GeneID" id="45050477"/>
<dbReference type="KEGG" id="cpa:CP_0323"/>
<dbReference type="KEGG" id="cpj:nqr5"/>
<dbReference type="KEGG" id="cpn:CPn_0430"/>
<dbReference type="KEGG" id="cpt:CpB0446"/>
<dbReference type="PATRIC" id="fig|115713.3.peg.477"/>
<dbReference type="eggNOG" id="COG2209">
    <property type="taxonomic scope" value="Bacteria"/>
</dbReference>
<dbReference type="HOGENOM" id="CLU_095255_0_0_0"/>
<dbReference type="OMA" id="ILGLCPF"/>
<dbReference type="OrthoDB" id="9803631at2"/>
<dbReference type="Proteomes" id="UP000000583">
    <property type="component" value="Chromosome"/>
</dbReference>
<dbReference type="Proteomes" id="UP000000801">
    <property type="component" value="Chromosome"/>
</dbReference>
<dbReference type="GO" id="GO:0009276">
    <property type="term" value="C:Gram-negative-bacterium-type cell wall"/>
    <property type="evidence" value="ECO:0007669"/>
    <property type="project" value="InterPro"/>
</dbReference>
<dbReference type="GO" id="GO:0005886">
    <property type="term" value="C:plasma membrane"/>
    <property type="evidence" value="ECO:0007669"/>
    <property type="project" value="UniProtKB-SubCell"/>
</dbReference>
<dbReference type="GO" id="GO:0016655">
    <property type="term" value="F:oxidoreductase activity, acting on NAD(P)H, quinone or similar compound as acceptor"/>
    <property type="evidence" value="ECO:0007669"/>
    <property type="project" value="UniProtKB-UniRule"/>
</dbReference>
<dbReference type="GO" id="GO:0022904">
    <property type="term" value="P:respiratory electron transport chain"/>
    <property type="evidence" value="ECO:0007669"/>
    <property type="project" value="InterPro"/>
</dbReference>
<dbReference type="GO" id="GO:0006814">
    <property type="term" value="P:sodium ion transport"/>
    <property type="evidence" value="ECO:0007669"/>
    <property type="project" value="UniProtKB-UniRule"/>
</dbReference>
<dbReference type="HAMAP" id="MF_00429">
    <property type="entry name" value="NqrE"/>
    <property type="match status" value="1"/>
</dbReference>
<dbReference type="InterPro" id="IPR003667">
    <property type="entry name" value="NqrDE/RnfAE"/>
</dbReference>
<dbReference type="InterPro" id="IPR050133">
    <property type="entry name" value="NqrDE/RnfAE_oxidrdctase"/>
</dbReference>
<dbReference type="InterPro" id="IPR010967">
    <property type="entry name" value="NqrE"/>
</dbReference>
<dbReference type="NCBIfam" id="TIGR01940">
    <property type="entry name" value="nqrE"/>
    <property type="match status" value="1"/>
</dbReference>
<dbReference type="NCBIfam" id="NF002200">
    <property type="entry name" value="PRK01061.1"/>
    <property type="match status" value="1"/>
</dbReference>
<dbReference type="PANTHER" id="PTHR30335">
    <property type="entry name" value="INTEGRAL MEMBRANE PROTEIN OF SOXR-REDUCING COMPLEX"/>
    <property type="match status" value="1"/>
</dbReference>
<dbReference type="PANTHER" id="PTHR30335:SF1">
    <property type="entry name" value="NA(+)-TRANSLOCATING NADH-QUINONE REDUCTASE SUBUNIT E"/>
    <property type="match status" value="1"/>
</dbReference>
<dbReference type="Pfam" id="PF02508">
    <property type="entry name" value="Rnf-Nqr"/>
    <property type="match status" value="1"/>
</dbReference>
<dbReference type="PIRSF" id="PIRSF006102">
    <property type="entry name" value="NQR_DE"/>
    <property type="match status" value="1"/>
</dbReference>
<accession>Q9Z8B3</accession>
<organism>
    <name type="scientific">Chlamydia pneumoniae</name>
    <name type="common">Chlamydophila pneumoniae</name>
    <dbReference type="NCBI Taxonomy" id="83558"/>
    <lineage>
        <taxon>Bacteria</taxon>
        <taxon>Pseudomonadati</taxon>
        <taxon>Chlamydiota</taxon>
        <taxon>Chlamydiia</taxon>
        <taxon>Chlamydiales</taxon>
        <taxon>Chlamydiaceae</taxon>
        <taxon>Chlamydia/Chlamydophila group</taxon>
        <taxon>Chlamydia</taxon>
    </lineage>
</organism>
<gene>
    <name evidence="1" type="primary">nqrE</name>
    <name type="synonym">nqr5</name>
    <name type="ordered locus">CPn_0430</name>
    <name type="ordered locus">CP_0323</name>
    <name type="ordered locus">CpB0446</name>
</gene>
<reference key="1">
    <citation type="journal article" date="1999" name="Nat. Genet.">
        <title>Comparative genomes of Chlamydia pneumoniae and C. trachomatis.</title>
        <authorList>
            <person name="Kalman S."/>
            <person name="Mitchell W.P."/>
            <person name="Marathe R."/>
            <person name="Lammel C.J."/>
            <person name="Fan J."/>
            <person name="Hyman R.W."/>
            <person name="Olinger L."/>
            <person name="Grimwood J."/>
            <person name="Davis R.W."/>
            <person name="Stephens R.S."/>
        </authorList>
    </citation>
    <scope>NUCLEOTIDE SEQUENCE [LARGE SCALE GENOMIC DNA]</scope>
    <source>
        <strain>CWL029</strain>
    </source>
</reference>
<reference key="2">
    <citation type="journal article" date="2000" name="Nucleic Acids Res.">
        <title>Genome sequences of Chlamydia trachomatis MoPn and Chlamydia pneumoniae AR39.</title>
        <authorList>
            <person name="Read T.D."/>
            <person name="Brunham R.C."/>
            <person name="Shen C."/>
            <person name="Gill S.R."/>
            <person name="Heidelberg J.F."/>
            <person name="White O."/>
            <person name="Hickey E.K."/>
            <person name="Peterson J.D."/>
            <person name="Utterback T.R."/>
            <person name="Berry K.J."/>
            <person name="Bass S."/>
            <person name="Linher K.D."/>
            <person name="Weidman J.F."/>
            <person name="Khouri H.M."/>
            <person name="Craven B."/>
            <person name="Bowman C."/>
            <person name="Dodson R.J."/>
            <person name="Gwinn M.L."/>
            <person name="Nelson W.C."/>
            <person name="DeBoy R.T."/>
            <person name="Kolonay J.F."/>
            <person name="McClarty G."/>
            <person name="Salzberg S.L."/>
            <person name="Eisen J.A."/>
            <person name="Fraser C.M."/>
        </authorList>
    </citation>
    <scope>NUCLEOTIDE SEQUENCE [LARGE SCALE GENOMIC DNA]</scope>
    <source>
        <strain>AR39</strain>
    </source>
</reference>
<reference key="3">
    <citation type="journal article" date="2000" name="Nucleic Acids Res.">
        <title>Comparison of whole genome sequences of Chlamydia pneumoniae J138 from Japan and CWL029 from USA.</title>
        <authorList>
            <person name="Shirai M."/>
            <person name="Hirakawa H."/>
            <person name="Kimoto M."/>
            <person name="Tabuchi M."/>
            <person name="Kishi F."/>
            <person name="Ouchi K."/>
            <person name="Shiba T."/>
            <person name="Ishii K."/>
            <person name="Hattori M."/>
            <person name="Kuhara S."/>
            <person name="Nakazawa T."/>
        </authorList>
    </citation>
    <scope>NUCLEOTIDE SEQUENCE [LARGE SCALE GENOMIC DNA]</scope>
    <source>
        <strain>J138</strain>
    </source>
</reference>
<reference key="4">
    <citation type="submission" date="2002-05" db="EMBL/GenBank/DDBJ databases">
        <title>The genome sequence of Chlamydia pneumoniae TW183 and comparison with other Chlamydia strains based on whole genome sequence analysis.</title>
        <authorList>
            <person name="Geng M.M."/>
            <person name="Schuhmacher A."/>
            <person name="Muehldorfer I."/>
            <person name="Bensch K.W."/>
            <person name="Schaefer K.P."/>
            <person name="Schneider S."/>
            <person name="Pohl T."/>
            <person name="Essig A."/>
            <person name="Marre R."/>
            <person name="Melchers K."/>
        </authorList>
    </citation>
    <scope>NUCLEOTIDE SEQUENCE [LARGE SCALE GENOMIC DNA]</scope>
    <source>
        <strain>TW-183</strain>
    </source>
</reference>
<feature type="chain" id="PRO_0000214249" description="Na(+)-translocating NADH-quinone reductase subunit E">
    <location>
        <begin position="1"/>
        <end position="256"/>
    </location>
</feature>
<feature type="transmembrane region" description="Helical" evidence="1">
    <location>
        <begin position="1"/>
        <end position="21"/>
    </location>
</feature>
<feature type="transmembrane region" description="Helical" evidence="1">
    <location>
        <begin position="50"/>
        <end position="70"/>
    </location>
</feature>
<feature type="transmembrane region" description="Helical" evidence="1">
    <location>
        <begin position="83"/>
        <end position="103"/>
    </location>
</feature>
<feature type="transmembrane region" description="Helical" evidence="1">
    <location>
        <begin position="123"/>
        <end position="143"/>
    </location>
</feature>
<feature type="transmembrane region" description="Helical" evidence="1">
    <location>
        <begin position="149"/>
        <end position="169"/>
    </location>
</feature>
<feature type="transmembrane region" description="Helical" evidence="1">
    <location>
        <begin position="189"/>
        <end position="209"/>
    </location>
</feature>
<feature type="region of interest" description="Disordered" evidence="2">
    <location>
        <begin position="229"/>
        <end position="256"/>
    </location>
</feature>
<feature type="compositionally biased region" description="Polar residues" evidence="2">
    <location>
        <begin position="229"/>
        <end position="249"/>
    </location>
</feature>
<protein>
    <recommendedName>
        <fullName evidence="1">Na(+)-translocating NADH-quinone reductase subunit E</fullName>
        <shortName evidence="1">Na(+)-NQR subunit E</shortName>
        <shortName evidence="1">Na(+)-translocating NQR subunit E</shortName>
        <ecNumber evidence="1">7.2.1.1</ecNumber>
    </recommendedName>
    <alternativeName>
        <fullName evidence="1">NQR complex subunit E</fullName>
    </alternativeName>
    <alternativeName>
        <fullName evidence="1">NQR-1 subunit E</fullName>
    </alternativeName>
</protein>
<comment type="function">
    <text evidence="1">NQR complex catalyzes the reduction of ubiquinone-1 to ubiquinol by two successive reactions, coupled with the transport of Na(+) ions from the cytoplasm to the periplasm. NqrA to NqrE are probably involved in the second step, the conversion of ubisemiquinone to ubiquinol.</text>
</comment>
<comment type="catalytic activity">
    <reaction evidence="1">
        <text>a ubiquinone + n Na(+)(in) + NADH + H(+) = a ubiquinol + n Na(+)(out) + NAD(+)</text>
        <dbReference type="Rhea" id="RHEA:47748"/>
        <dbReference type="Rhea" id="RHEA-COMP:9565"/>
        <dbReference type="Rhea" id="RHEA-COMP:9566"/>
        <dbReference type="ChEBI" id="CHEBI:15378"/>
        <dbReference type="ChEBI" id="CHEBI:16389"/>
        <dbReference type="ChEBI" id="CHEBI:17976"/>
        <dbReference type="ChEBI" id="CHEBI:29101"/>
        <dbReference type="ChEBI" id="CHEBI:57540"/>
        <dbReference type="ChEBI" id="CHEBI:57945"/>
        <dbReference type="EC" id="7.2.1.1"/>
    </reaction>
</comment>
<comment type="subunit">
    <text evidence="1">Composed of six subunits; NqrA, NqrB, NqrC, NqrD, NqrE and NqrF.</text>
</comment>
<comment type="subcellular location">
    <subcellularLocation>
        <location evidence="1">Cell inner membrane</location>
        <topology evidence="1">Multi-pass membrane protein</topology>
    </subcellularLocation>
</comment>
<comment type="similarity">
    <text evidence="1">Belongs to the NqrDE/RnfAE family.</text>
</comment>
<keyword id="KW-0997">Cell inner membrane</keyword>
<keyword id="KW-1003">Cell membrane</keyword>
<keyword id="KW-0406">Ion transport</keyword>
<keyword id="KW-0472">Membrane</keyword>
<keyword id="KW-0520">NAD</keyword>
<keyword id="KW-0915">Sodium</keyword>
<keyword id="KW-0739">Sodium transport</keyword>
<keyword id="KW-1278">Translocase</keyword>
<keyword id="KW-0812">Transmembrane</keyword>
<keyword id="KW-1133">Transmembrane helix</keyword>
<keyword id="KW-0813">Transport</keyword>
<keyword id="KW-0830">Ubiquinone</keyword>
<sequence length="256" mass="27792">MWLGAYTWLNVFGILLQAAFIQNILLANFLGMCSYLACSTRVSTANGLGMSVALVLTVTGSINWFVHAFITGPKALTWISPSLASVNLGFLELIIFIVVIAAFTQILELLLEKVSRNLYLSLGIFLPLIAVNCAILGGVLFGITRSYPFIPMMIFSLGAGCGWWLAIVILATIKEKLAYSDIPKNLQGMGISFITTGLIAMAFMSLTGIDISKPSAKIQRAPLETEVVENTTNPLKESSSKHQPSISKARTQRRSL</sequence>